<keyword id="KW-0066">ATP synthesis</keyword>
<keyword id="KW-0139">CF(1)</keyword>
<keyword id="KW-0375">Hydrogen ion transport</keyword>
<keyword id="KW-0406">Ion transport</keyword>
<keyword id="KW-0472">Membrane</keyword>
<keyword id="KW-1185">Reference proteome</keyword>
<keyword id="KW-0793">Thylakoid</keyword>
<keyword id="KW-0813">Transport</keyword>
<evidence type="ECO:0000255" key="1">
    <source>
        <dbReference type="HAMAP-Rule" id="MF_00530"/>
    </source>
</evidence>
<evidence type="ECO:0000256" key="2">
    <source>
        <dbReference type="SAM" id="MobiDB-lite"/>
    </source>
</evidence>
<comment type="function">
    <text evidence="1">Produces ATP from ADP in the presence of a proton gradient across the membrane.</text>
</comment>
<comment type="subunit">
    <text evidence="1">F-type ATPases have 2 components, CF(1) - the catalytic core - and CF(0) - the membrane proton channel. CF(1) has five subunits: alpha(3), beta(3), gamma(1), delta(1), epsilon(1). CF(0) has three main subunits: a, b and c.</text>
</comment>
<comment type="subcellular location">
    <subcellularLocation>
        <location evidence="1">Cellular thylakoid membrane</location>
        <topology evidence="1">Peripheral membrane protein</topology>
    </subcellularLocation>
</comment>
<comment type="similarity">
    <text evidence="1">Belongs to the ATPase epsilon chain family.</text>
</comment>
<proteinExistence type="inferred from homology"/>
<dbReference type="EMBL" id="CT978603">
    <property type="protein sequence ID" value="CAK28765.1"/>
    <property type="molecule type" value="Genomic_DNA"/>
</dbReference>
<dbReference type="SMR" id="A5GV56"/>
<dbReference type="STRING" id="316278.SynRCC307_1862"/>
<dbReference type="KEGG" id="syr:SynRCC307_1862"/>
<dbReference type="eggNOG" id="COG0355">
    <property type="taxonomic scope" value="Bacteria"/>
</dbReference>
<dbReference type="HOGENOM" id="CLU_084338_1_2_3"/>
<dbReference type="OrthoDB" id="9804110at2"/>
<dbReference type="Proteomes" id="UP000001115">
    <property type="component" value="Chromosome"/>
</dbReference>
<dbReference type="GO" id="GO:0031676">
    <property type="term" value="C:plasma membrane-derived thylakoid membrane"/>
    <property type="evidence" value="ECO:0007669"/>
    <property type="project" value="UniProtKB-SubCell"/>
</dbReference>
<dbReference type="GO" id="GO:0045259">
    <property type="term" value="C:proton-transporting ATP synthase complex"/>
    <property type="evidence" value="ECO:0007669"/>
    <property type="project" value="UniProtKB-KW"/>
</dbReference>
<dbReference type="GO" id="GO:0005524">
    <property type="term" value="F:ATP binding"/>
    <property type="evidence" value="ECO:0007669"/>
    <property type="project" value="UniProtKB-UniRule"/>
</dbReference>
<dbReference type="GO" id="GO:0046933">
    <property type="term" value="F:proton-transporting ATP synthase activity, rotational mechanism"/>
    <property type="evidence" value="ECO:0007669"/>
    <property type="project" value="UniProtKB-UniRule"/>
</dbReference>
<dbReference type="CDD" id="cd12152">
    <property type="entry name" value="F1-ATPase_delta"/>
    <property type="match status" value="1"/>
</dbReference>
<dbReference type="Gene3D" id="2.60.15.10">
    <property type="entry name" value="F0F1 ATP synthase delta/epsilon subunit, N-terminal"/>
    <property type="match status" value="1"/>
</dbReference>
<dbReference type="Gene3D" id="1.10.287.540">
    <property type="entry name" value="Helix hairpin bin"/>
    <property type="match status" value="1"/>
</dbReference>
<dbReference type="HAMAP" id="MF_00530">
    <property type="entry name" value="ATP_synth_epsil_bac"/>
    <property type="match status" value="1"/>
</dbReference>
<dbReference type="InterPro" id="IPR001469">
    <property type="entry name" value="ATP_synth_F1_dsu/esu"/>
</dbReference>
<dbReference type="InterPro" id="IPR020546">
    <property type="entry name" value="ATP_synth_F1_dsu/esu_N"/>
</dbReference>
<dbReference type="InterPro" id="IPR020547">
    <property type="entry name" value="ATP_synth_F1_esu_C"/>
</dbReference>
<dbReference type="InterPro" id="IPR036771">
    <property type="entry name" value="ATPsynth_dsu/esu_N"/>
</dbReference>
<dbReference type="NCBIfam" id="TIGR01216">
    <property type="entry name" value="ATP_synt_epsi"/>
    <property type="match status" value="1"/>
</dbReference>
<dbReference type="PANTHER" id="PTHR13822">
    <property type="entry name" value="ATP SYNTHASE DELTA/EPSILON CHAIN"/>
    <property type="match status" value="1"/>
</dbReference>
<dbReference type="PANTHER" id="PTHR13822:SF10">
    <property type="entry name" value="ATP SYNTHASE EPSILON CHAIN, CHLOROPLASTIC"/>
    <property type="match status" value="1"/>
</dbReference>
<dbReference type="Pfam" id="PF00401">
    <property type="entry name" value="ATP-synt_DE"/>
    <property type="match status" value="1"/>
</dbReference>
<dbReference type="Pfam" id="PF02823">
    <property type="entry name" value="ATP-synt_DE_N"/>
    <property type="match status" value="1"/>
</dbReference>
<dbReference type="SUPFAM" id="SSF51344">
    <property type="entry name" value="Epsilon subunit of F1F0-ATP synthase N-terminal domain"/>
    <property type="match status" value="1"/>
</dbReference>
<organism>
    <name type="scientific">Synechococcus sp. (strain RCC307)</name>
    <dbReference type="NCBI Taxonomy" id="316278"/>
    <lineage>
        <taxon>Bacteria</taxon>
        <taxon>Bacillati</taxon>
        <taxon>Cyanobacteriota</taxon>
        <taxon>Cyanophyceae</taxon>
        <taxon>Synechococcales</taxon>
        <taxon>Synechococcaceae</taxon>
        <taxon>Synechococcus</taxon>
    </lineage>
</organism>
<gene>
    <name evidence="1" type="primary">atpC</name>
    <name type="ordered locus">SynRCC307_1862</name>
</gene>
<accession>A5GV56</accession>
<feature type="chain" id="PRO_1000056547" description="ATP synthase epsilon chain">
    <location>
        <begin position="1"/>
        <end position="135"/>
    </location>
</feature>
<feature type="region of interest" description="Disordered" evidence="2">
    <location>
        <begin position="91"/>
        <end position="122"/>
    </location>
</feature>
<reference key="1">
    <citation type="submission" date="2006-05" db="EMBL/GenBank/DDBJ databases">
        <authorList>
            <consortium name="Genoscope"/>
        </authorList>
    </citation>
    <scope>NUCLEOTIDE SEQUENCE [LARGE SCALE GENOMIC DNA]</scope>
    <source>
        <strain>RCC307</strain>
    </source>
</reference>
<name>ATPE_SYNR3</name>
<protein>
    <recommendedName>
        <fullName evidence="1">ATP synthase epsilon chain</fullName>
    </recommendedName>
    <alternativeName>
        <fullName evidence="1">ATP synthase F1 sector epsilon subunit</fullName>
    </alternativeName>
    <alternativeName>
        <fullName evidence="1">F-ATPase epsilon subunit</fullName>
    </alternativeName>
</protein>
<sequence>MALTLRVLCPDQNVFDGQADEVILPSTTGQLGVLPGHVSLLTALDVGVLRMRDGNQWTAIALMGGFAEVDDDEVSVLVNAAEPASGINAEEAQKQLSEAEQAWSKFDGQPNSPDKIKAQQAFQKARARLQATKAN</sequence>